<organism>
    <name type="scientific">Haemophilus ducreyi (strain 35000HP / ATCC 700724)</name>
    <dbReference type="NCBI Taxonomy" id="233412"/>
    <lineage>
        <taxon>Bacteria</taxon>
        <taxon>Pseudomonadati</taxon>
        <taxon>Pseudomonadota</taxon>
        <taxon>Gammaproteobacteria</taxon>
        <taxon>Pasteurellales</taxon>
        <taxon>Pasteurellaceae</taxon>
        <taxon>Haemophilus</taxon>
    </lineage>
</organism>
<accession>Q7VLE3</accession>
<gene>
    <name type="ordered locus">HD_1515</name>
</gene>
<dbReference type="EMBL" id="AE017143">
    <property type="protein sequence ID" value="AAP96305.1"/>
    <property type="molecule type" value="Genomic_DNA"/>
</dbReference>
<dbReference type="RefSeq" id="WP_010945350.1">
    <property type="nucleotide sequence ID" value="NC_002940.2"/>
</dbReference>
<dbReference type="SMR" id="Q7VLE3"/>
<dbReference type="STRING" id="233412.HD_1515"/>
<dbReference type="KEGG" id="hdu:HD_1515"/>
<dbReference type="eggNOG" id="COG3082">
    <property type="taxonomic scope" value="Bacteria"/>
</dbReference>
<dbReference type="HOGENOM" id="CLU_175457_0_0_6"/>
<dbReference type="OrthoDB" id="5771474at2"/>
<dbReference type="Proteomes" id="UP000001022">
    <property type="component" value="Chromosome"/>
</dbReference>
<dbReference type="Gene3D" id="1.10.3390.10">
    <property type="entry name" value="YejL-like"/>
    <property type="match status" value="1"/>
</dbReference>
<dbReference type="HAMAP" id="MF_00816">
    <property type="entry name" value="UPF0352"/>
    <property type="match status" value="1"/>
</dbReference>
<dbReference type="InterPro" id="IPR009857">
    <property type="entry name" value="UPF0352"/>
</dbReference>
<dbReference type="InterPro" id="IPR023202">
    <property type="entry name" value="YejL_sf"/>
</dbReference>
<dbReference type="NCBIfam" id="NF010242">
    <property type="entry name" value="PRK13689.1"/>
    <property type="match status" value="1"/>
</dbReference>
<dbReference type="Pfam" id="PF07208">
    <property type="entry name" value="DUF1414"/>
    <property type="match status" value="1"/>
</dbReference>
<dbReference type="PIRSF" id="PIRSF006188">
    <property type="entry name" value="UCP006188"/>
    <property type="match status" value="1"/>
</dbReference>
<dbReference type="SUPFAM" id="SSF158651">
    <property type="entry name" value="YejL-like"/>
    <property type="match status" value="1"/>
</dbReference>
<proteinExistence type="inferred from homology"/>
<keyword id="KW-1185">Reference proteome</keyword>
<sequence length="73" mass="8270">MAKQSKYQSKQFEQLSYDLITILEKHKAPVDLSIMALGNLVSNILLENIQTETQRMVLADTFSTALKNSLKAR</sequence>
<name>Y1515_HAEDU</name>
<reference key="1">
    <citation type="submission" date="2003-06" db="EMBL/GenBank/DDBJ databases">
        <title>The complete genome sequence of Haemophilus ducreyi.</title>
        <authorList>
            <person name="Munson R.S. Jr."/>
            <person name="Ray W.C."/>
            <person name="Mahairas G."/>
            <person name="Sabo P."/>
            <person name="Mungur R."/>
            <person name="Johnson L."/>
            <person name="Nguyen D."/>
            <person name="Wang J."/>
            <person name="Forst C."/>
            <person name="Hood L."/>
        </authorList>
    </citation>
    <scope>NUCLEOTIDE SEQUENCE [LARGE SCALE GENOMIC DNA]</scope>
    <source>
        <strain>35000HP / ATCC 700724</strain>
    </source>
</reference>
<evidence type="ECO:0000255" key="1">
    <source>
        <dbReference type="HAMAP-Rule" id="MF_00816"/>
    </source>
</evidence>
<comment type="similarity">
    <text evidence="1">Belongs to the UPF0352 family.</text>
</comment>
<feature type="chain" id="PRO_0000201788" description="UPF0352 protein HD_1515">
    <location>
        <begin position="1"/>
        <end position="73"/>
    </location>
</feature>
<protein>
    <recommendedName>
        <fullName evidence="1">UPF0352 protein HD_1515</fullName>
    </recommendedName>
</protein>